<sequence>HSQGTFTSDYSKYLDSRRAQDFVQWLMST</sequence>
<organism>
    <name type="scientific">Meleagris gallopavo</name>
    <name type="common">Wild turkey</name>
    <dbReference type="NCBI Taxonomy" id="9103"/>
    <lineage>
        <taxon>Eukaryota</taxon>
        <taxon>Metazoa</taxon>
        <taxon>Chordata</taxon>
        <taxon>Craniata</taxon>
        <taxon>Vertebrata</taxon>
        <taxon>Euteleostomi</taxon>
        <taxon>Archelosauria</taxon>
        <taxon>Archosauria</taxon>
        <taxon>Dinosauria</taxon>
        <taxon>Saurischia</taxon>
        <taxon>Theropoda</taxon>
        <taxon>Coelurosauria</taxon>
        <taxon>Aves</taxon>
        <taxon>Neognathae</taxon>
        <taxon>Galloanserae</taxon>
        <taxon>Galliformes</taxon>
        <taxon>Phasianidae</taxon>
        <taxon>Meleagridinae</taxon>
        <taxon>Meleagris</taxon>
    </lineage>
</organism>
<proteinExistence type="evidence at protein level"/>
<gene>
    <name type="primary">GCG</name>
</gene>
<reference key="1">
    <citation type="journal article" date="1972" name="Horm. Metab. Res.">
        <title>Turkey glucagon: crystallization, amino acid composition and immunology.</title>
        <authorList>
            <person name="Markussen J."/>
            <person name="Frandsen E.K."/>
            <person name="Heding L.G."/>
            <person name="Sundby F."/>
        </authorList>
    </citation>
    <scope>PROTEIN SEQUENCE</scope>
    <scope>AMINO-ACID COMPOSITION</scope>
    <scope>CRYSTALLIZATION</scope>
</reference>
<keyword id="KW-0903">Direct protein sequencing</keyword>
<keyword id="KW-0372">Hormone</keyword>
<keyword id="KW-1185">Reference proteome</keyword>
<keyword id="KW-0964">Secreted</keyword>
<accession>P68260</accession>
<accession>P01277</accession>
<accession>Q91410</accession>
<dbReference type="SMR" id="P68260"/>
<dbReference type="HOGENOM" id="CLU_090687_0_0_1"/>
<dbReference type="InParanoid" id="P68260"/>
<dbReference type="OrthoDB" id="9904258at2759"/>
<dbReference type="Proteomes" id="UP000001645">
    <property type="component" value="Unplaced"/>
</dbReference>
<dbReference type="GO" id="GO:0005615">
    <property type="term" value="C:extracellular space"/>
    <property type="evidence" value="ECO:0007669"/>
    <property type="project" value="TreeGrafter"/>
</dbReference>
<dbReference type="GO" id="GO:0031769">
    <property type="term" value="F:glucagon receptor binding"/>
    <property type="evidence" value="ECO:0007669"/>
    <property type="project" value="TreeGrafter"/>
</dbReference>
<dbReference type="GO" id="GO:0005179">
    <property type="term" value="F:hormone activity"/>
    <property type="evidence" value="ECO:0007669"/>
    <property type="project" value="UniProtKB-KW"/>
</dbReference>
<dbReference type="GO" id="GO:0007188">
    <property type="term" value="P:adenylate cyclase-modulating G protein-coupled receptor signaling pathway"/>
    <property type="evidence" value="ECO:0007669"/>
    <property type="project" value="TreeGrafter"/>
</dbReference>
<dbReference type="GO" id="GO:0043066">
    <property type="term" value="P:negative regulation of apoptotic process"/>
    <property type="evidence" value="ECO:0007669"/>
    <property type="project" value="TreeGrafter"/>
</dbReference>
<dbReference type="GO" id="GO:0035774">
    <property type="term" value="P:positive regulation of insulin secretion involved in cellular response to glucose stimulus"/>
    <property type="evidence" value="ECO:0007669"/>
    <property type="project" value="TreeGrafter"/>
</dbReference>
<dbReference type="GO" id="GO:0010737">
    <property type="term" value="P:protein kinase A signaling"/>
    <property type="evidence" value="ECO:0007669"/>
    <property type="project" value="TreeGrafter"/>
</dbReference>
<dbReference type="Gene3D" id="6.10.250.590">
    <property type="match status" value="1"/>
</dbReference>
<dbReference type="InterPro" id="IPR015550">
    <property type="entry name" value="Glucagon"/>
</dbReference>
<dbReference type="InterPro" id="IPR000532">
    <property type="entry name" value="Glucagon_GIP_secretin_VIP"/>
</dbReference>
<dbReference type="PANTHER" id="PTHR11418">
    <property type="entry name" value="GLUCAGON"/>
    <property type="match status" value="1"/>
</dbReference>
<dbReference type="PANTHER" id="PTHR11418:SF0">
    <property type="entry name" value="PRO-GLUCAGON"/>
    <property type="match status" value="1"/>
</dbReference>
<dbReference type="Pfam" id="PF00123">
    <property type="entry name" value="Hormone_2"/>
    <property type="match status" value="1"/>
</dbReference>
<dbReference type="PRINTS" id="PR00275">
    <property type="entry name" value="GLUCAGON"/>
</dbReference>
<dbReference type="SMART" id="SM00070">
    <property type="entry name" value="GLUCA"/>
    <property type="match status" value="1"/>
</dbReference>
<dbReference type="PROSITE" id="PS00260">
    <property type="entry name" value="GLUCAGON"/>
    <property type="match status" value="1"/>
</dbReference>
<comment type="function">
    <text evidence="1">Glucagon plays a key role in glucose metabolism and homeostasis. Regulates blood glucose by increasing gluconeogenesis and decreasing glycolysis (By similarity).</text>
</comment>
<comment type="subcellular location">
    <subcellularLocation>
        <location evidence="1">Secreted</location>
    </subcellularLocation>
</comment>
<comment type="similarity">
    <text evidence="2">Belongs to the glucagon family.</text>
</comment>
<protein>
    <recommendedName>
        <fullName>Glucagon</fullName>
    </recommendedName>
</protein>
<name>GLUC_MELGA</name>
<evidence type="ECO:0000250" key="1"/>
<evidence type="ECO:0000305" key="2"/>
<feature type="peptide" id="PRO_0000043923" description="Glucagon">
    <location>
        <begin position="1"/>
        <end position="29"/>
    </location>
</feature>